<dbReference type="EMBL" id="CP000412">
    <property type="protein sequence ID" value="ABJ58194.1"/>
    <property type="molecule type" value="Genomic_DNA"/>
</dbReference>
<dbReference type="RefSeq" id="WP_003618942.1">
    <property type="nucleotide sequence ID" value="NC_008529.1"/>
</dbReference>
<dbReference type="SMR" id="Q04BH8"/>
<dbReference type="KEGG" id="lbu:LBUL_0558"/>
<dbReference type="HOGENOM" id="CLU_053282_1_0_9"/>
<dbReference type="BioCyc" id="LDEL321956:LBUL_RS02650-MONOMER"/>
<dbReference type="GO" id="GO:0003677">
    <property type="term" value="F:DNA binding"/>
    <property type="evidence" value="ECO:0007669"/>
    <property type="project" value="UniProtKB-UniRule"/>
</dbReference>
<dbReference type="GO" id="GO:0051301">
    <property type="term" value="P:cell division"/>
    <property type="evidence" value="ECO:0007669"/>
    <property type="project" value="UniProtKB-UniRule"/>
</dbReference>
<dbReference type="GO" id="GO:0043937">
    <property type="term" value="P:regulation of sporulation"/>
    <property type="evidence" value="ECO:0007669"/>
    <property type="project" value="InterPro"/>
</dbReference>
<dbReference type="Gene3D" id="3.10.28.10">
    <property type="entry name" value="Homing endonucleases"/>
    <property type="match status" value="1"/>
</dbReference>
<dbReference type="HAMAP" id="MF_01420">
    <property type="entry name" value="HTH_type_WhiA"/>
    <property type="match status" value="1"/>
</dbReference>
<dbReference type="InterPro" id="IPR027434">
    <property type="entry name" value="Homing_endonucl"/>
</dbReference>
<dbReference type="InterPro" id="IPR018478">
    <property type="entry name" value="Sporu_reg_WhiA_N_dom"/>
</dbReference>
<dbReference type="InterPro" id="IPR003802">
    <property type="entry name" value="Sporulation_regulator_WhiA"/>
</dbReference>
<dbReference type="InterPro" id="IPR023054">
    <property type="entry name" value="Sporulation_regulator_WhiA_C"/>
</dbReference>
<dbReference type="InterPro" id="IPR039518">
    <property type="entry name" value="WhiA_LAGLIDADG_dom"/>
</dbReference>
<dbReference type="NCBIfam" id="TIGR00647">
    <property type="entry name" value="DNA_bind_WhiA"/>
    <property type="match status" value="1"/>
</dbReference>
<dbReference type="PANTHER" id="PTHR37307">
    <property type="entry name" value="CELL DIVISION PROTEIN WHIA-RELATED"/>
    <property type="match status" value="1"/>
</dbReference>
<dbReference type="PANTHER" id="PTHR37307:SF1">
    <property type="entry name" value="CELL DIVISION PROTEIN WHIA-RELATED"/>
    <property type="match status" value="1"/>
</dbReference>
<dbReference type="Pfam" id="PF02650">
    <property type="entry name" value="HTH_WhiA"/>
    <property type="match status" value="1"/>
</dbReference>
<dbReference type="Pfam" id="PF14527">
    <property type="entry name" value="LAGLIDADG_WhiA"/>
    <property type="match status" value="1"/>
</dbReference>
<dbReference type="Pfam" id="PF10298">
    <property type="entry name" value="WhiA_N"/>
    <property type="match status" value="1"/>
</dbReference>
<dbReference type="SUPFAM" id="SSF55608">
    <property type="entry name" value="Homing endonucleases"/>
    <property type="match status" value="1"/>
</dbReference>
<name>WHIA_LACDB</name>
<organism>
    <name type="scientific">Lactobacillus delbrueckii subsp. bulgaricus (strain ATCC BAA-365 / Lb-18)</name>
    <dbReference type="NCBI Taxonomy" id="321956"/>
    <lineage>
        <taxon>Bacteria</taxon>
        <taxon>Bacillati</taxon>
        <taxon>Bacillota</taxon>
        <taxon>Bacilli</taxon>
        <taxon>Lactobacillales</taxon>
        <taxon>Lactobacillaceae</taxon>
        <taxon>Lactobacillus</taxon>
    </lineage>
</organism>
<keyword id="KW-0131">Cell cycle</keyword>
<keyword id="KW-0132">Cell division</keyword>
<keyword id="KW-0238">DNA-binding</keyword>
<accession>Q04BH8</accession>
<sequence>MASYASEVKKELTSIEVHPEHAKAELAAFLRMNAVLSRHDGQMSLDIVTENPAIARRIFSLIKTAYGFEPQLIVTRKMKLKKNHQYLVRVAQMVSEIMADLEIYSPKKGFITGVPDKIKYSEQRSMSYLRGGFLASGSVNNPETSRYHLEIYCTYANHSQDLQEIMNKYFDLNAKVTARRSGSIVYLKEAEKIGDFLHVVGAVNAMLAFEDLRIMRDMRNSVNRLVNCDTANLRKTAGAAAKQVEDIELIDQKQGLESLPEKLASLARFRLQHPELSLKELAEQVPDGPISKSGVNHRLKKLHEIAENLR</sequence>
<proteinExistence type="inferred from homology"/>
<gene>
    <name evidence="1" type="primary">whiA</name>
    <name type="ordered locus">LBUL_0558</name>
</gene>
<feature type="chain" id="PRO_0000376498" description="Probable cell division protein WhiA">
    <location>
        <begin position="1"/>
        <end position="310"/>
    </location>
</feature>
<feature type="DNA-binding region" description="H-T-H motif" evidence="1">
    <location>
        <begin position="277"/>
        <end position="310"/>
    </location>
</feature>
<comment type="function">
    <text evidence="1">Involved in cell division and chromosome segregation.</text>
</comment>
<comment type="similarity">
    <text evidence="1">Belongs to the WhiA family.</text>
</comment>
<reference key="1">
    <citation type="journal article" date="2006" name="Proc. Natl. Acad. Sci. U.S.A.">
        <title>Comparative genomics of the lactic acid bacteria.</title>
        <authorList>
            <person name="Makarova K.S."/>
            <person name="Slesarev A."/>
            <person name="Wolf Y.I."/>
            <person name="Sorokin A."/>
            <person name="Mirkin B."/>
            <person name="Koonin E.V."/>
            <person name="Pavlov A."/>
            <person name="Pavlova N."/>
            <person name="Karamychev V."/>
            <person name="Polouchine N."/>
            <person name="Shakhova V."/>
            <person name="Grigoriev I."/>
            <person name="Lou Y."/>
            <person name="Rohksar D."/>
            <person name="Lucas S."/>
            <person name="Huang K."/>
            <person name="Goodstein D.M."/>
            <person name="Hawkins T."/>
            <person name="Plengvidhya V."/>
            <person name="Welker D."/>
            <person name="Hughes J."/>
            <person name="Goh Y."/>
            <person name="Benson A."/>
            <person name="Baldwin K."/>
            <person name="Lee J.-H."/>
            <person name="Diaz-Muniz I."/>
            <person name="Dosti B."/>
            <person name="Smeianov V."/>
            <person name="Wechter W."/>
            <person name="Barabote R."/>
            <person name="Lorca G."/>
            <person name="Altermann E."/>
            <person name="Barrangou R."/>
            <person name="Ganesan B."/>
            <person name="Xie Y."/>
            <person name="Rawsthorne H."/>
            <person name="Tamir D."/>
            <person name="Parker C."/>
            <person name="Breidt F."/>
            <person name="Broadbent J.R."/>
            <person name="Hutkins R."/>
            <person name="O'Sullivan D."/>
            <person name="Steele J."/>
            <person name="Unlu G."/>
            <person name="Saier M.H. Jr."/>
            <person name="Klaenhammer T."/>
            <person name="Richardson P."/>
            <person name="Kozyavkin S."/>
            <person name="Weimer B.C."/>
            <person name="Mills D.A."/>
        </authorList>
    </citation>
    <scope>NUCLEOTIDE SEQUENCE [LARGE SCALE GENOMIC DNA]</scope>
    <source>
        <strain>ATCC BAA-365 / Lb-18</strain>
    </source>
</reference>
<evidence type="ECO:0000255" key="1">
    <source>
        <dbReference type="HAMAP-Rule" id="MF_01420"/>
    </source>
</evidence>
<protein>
    <recommendedName>
        <fullName evidence="1">Probable cell division protein WhiA</fullName>
    </recommendedName>
</protein>